<proteinExistence type="inferred from homology"/>
<feature type="chain" id="PRO_0000131665" description="Small ribosomal subunit protein uS5c">
    <location>
        <begin position="1"/>
        <end position="169"/>
    </location>
</feature>
<feature type="domain" description="S5 DRBM">
    <location>
        <begin position="17"/>
        <end position="80"/>
    </location>
</feature>
<keyword id="KW-0194">Cyanelle</keyword>
<keyword id="KW-0934">Plastid</keyword>
<keyword id="KW-0687">Ribonucleoprotein</keyword>
<keyword id="KW-0689">Ribosomal protein</keyword>
<keyword id="KW-0694">RNA-binding</keyword>
<keyword id="KW-0699">rRNA-binding</keyword>
<organism>
    <name type="scientific">Cyanophora paradoxa</name>
    <dbReference type="NCBI Taxonomy" id="2762"/>
    <lineage>
        <taxon>Eukaryota</taxon>
        <taxon>Glaucocystophyceae</taxon>
        <taxon>Cyanophoraceae</taxon>
        <taxon>Cyanophora</taxon>
    </lineage>
</organism>
<comment type="function">
    <text evidence="1">With S4 and S12 plays an important role in translational accuracy.</text>
</comment>
<comment type="subunit">
    <text evidence="1">Part of the 30S ribosomal subunit. Contacts protein S4 (By similarity).</text>
</comment>
<comment type="subcellular location">
    <subcellularLocation>
        <location>Plastid</location>
        <location>Cyanelle</location>
    </subcellularLocation>
</comment>
<comment type="domain">
    <text>The N-terminal domain interacts with the head of the 30S subunit; the C-terminal domain interacts with the body and contacts protein S4. The interaction surface between S4 and S5 is involved in control of translational fidelity.</text>
</comment>
<comment type="similarity">
    <text evidence="2">Belongs to the universal ribosomal protein uS5 family.</text>
</comment>
<geneLocation type="cyanelle"/>
<dbReference type="EMBL" id="M30487">
    <property type="protein sequence ID" value="AAA63629.1"/>
    <property type="molecule type" value="Genomic_DNA"/>
</dbReference>
<dbReference type="EMBL" id="U30821">
    <property type="protein sequence ID" value="AAA81219.1"/>
    <property type="molecule type" value="Genomic_DNA"/>
</dbReference>
<dbReference type="PIR" id="S12220">
    <property type="entry name" value="R3KT5"/>
</dbReference>
<dbReference type="RefSeq" id="NP_043188.1">
    <property type="nucleotide sequence ID" value="NC_001675.1"/>
</dbReference>
<dbReference type="SMR" id="P23402"/>
<dbReference type="GeneID" id="801595"/>
<dbReference type="GO" id="GO:0009842">
    <property type="term" value="C:cyanelle"/>
    <property type="evidence" value="ECO:0007669"/>
    <property type="project" value="UniProtKB-SubCell"/>
</dbReference>
<dbReference type="GO" id="GO:0015935">
    <property type="term" value="C:small ribosomal subunit"/>
    <property type="evidence" value="ECO:0007669"/>
    <property type="project" value="InterPro"/>
</dbReference>
<dbReference type="GO" id="GO:0019843">
    <property type="term" value="F:rRNA binding"/>
    <property type="evidence" value="ECO:0007669"/>
    <property type="project" value="UniProtKB-KW"/>
</dbReference>
<dbReference type="GO" id="GO:0003735">
    <property type="term" value="F:structural constituent of ribosome"/>
    <property type="evidence" value="ECO:0007669"/>
    <property type="project" value="InterPro"/>
</dbReference>
<dbReference type="GO" id="GO:0006412">
    <property type="term" value="P:translation"/>
    <property type="evidence" value="ECO:0007669"/>
    <property type="project" value="InterPro"/>
</dbReference>
<dbReference type="FunFam" id="3.30.230.10:FF:000002">
    <property type="entry name" value="30S ribosomal protein S5"/>
    <property type="match status" value="1"/>
</dbReference>
<dbReference type="Gene3D" id="3.30.160.20">
    <property type="match status" value="1"/>
</dbReference>
<dbReference type="Gene3D" id="3.30.230.10">
    <property type="match status" value="1"/>
</dbReference>
<dbReference type="HAMAP" id="MF_01307_B">
    <property type="entry name" value="Ribosomal_uS5_B"/>
    <property type="match status" value="1"/>
</dbReference>
<dbReference type="InterPro" id="IPR020568">
    <property type="entry name" value="Ribosomal_Su5_D2-typ_SF"/>
</dbReference>
<dbReference type="InterPro" id="IPR000851">
    <property type="entry name" value="Ribosomal_uS5"/>
</dbReference>
<dbReference type="InterPro" id="IPR005712">
    <property type="entry name" value="Ribosomal_uS5_bac-type"/>
</dbReference>
<dbReference type="InterPro" id="IPR005324">
    <property type="entry name" value="Ribosomal_uS5_C"/>
</dbReference>
<dbReference type="InterPro" id="IPR013810">
    <property type="entry name" value="Ribosomal_uS5_N"/>
</dbReference>
<dbReference type="InterPro" id="IPR018192">
    <property type="entry name" value="Ribosomal_uS5_N_CS"/>
</dbReference>
<dbReference type="InterPro" id="IPR014721">
    <property type="entry name" value="Ribsml_uS5_D2-typ_fold_subgr"/>
</dbReference>
<dbReference type="NCBIfam" id="TIGR01021">
    <property type="entry name" value="rpsE_bact"/>
    <property type="match status" value="1"/>
</dbReference>
<dbReference type="PANTHER" id="PTHR48277">
    <property type="entry name" value="MITOCHONDRIAL RIBOSOMAL PROTEIN S5"/>
    <property type="match status" value="1"/>
</dbReference>
<dbReference type="PANTHER" id="PTHR48277:SF1">
    <property type="entry name" value="MITOCHONDRIAL RIBOSOMAL PROTEIN S5"/>
    <property type="match status" value="1"/>
</dbReference>
<dbReference type="Pfam" id="PF00333">
    <property type="entry name" value="Ribosomal_S5"/>
    <property type="match status" value="1"/>
</dbReference>
<dbReference type="Pfam" id="PF03719">
    <property type="entry name" value="Ribosomal_S5_C"/>
    <property type="match status" value="1"/>
</dbReference>
<dbReference type="SUPFAM" id="SSF54768">
    <property type="entry name" value="dsRNA-binding domain-like"/>
    <property type="match status" value="1"/>
</dbReference>
<dbReference type="SUPFAM" id="SSF54211">
    <property type="entry name" value="Ribosomal protein S5 domain 2-like"/>
    <property type="match status" value="1"/>
</dbReference>
<dbReference type="PROSITE" id="PS00585">
    <property type="entry name" value="RIBOSOMAL_S5"/>
    <property type="match status" value="1"/>
</dbReference>
<dbReference type="PROSITE" id="PS50881">
    <property type="entry name" value="S5_DSRBD"/>
    <property type="match status" value="1"/>
</dbReference>
<protein>
    <recommendedName>
        <fullName evidence="2">Small ribosomal subunit protein uS5c</fullName>
    </recommendedName>
    <alternativeName>
        <fullName>30S ribosomal protein S5, cyanelle</fullName>
    </alternativeName>
</protein>
<accession>P23402</accession>
<reference key="1">
    <citation type="journal article" date="1990" name="Mol. Gen. Genet.">
        <title>The cyanelle S10 spc ribosomal protein gene operon from Cyanophora paradoxa.</title>
        <authorList>
            <person name="Michalowski C.B."/>
            <person name="Pfanzagl B."/>
            <person name="Loeffelhardt W."/>
            <person name="Bohnert H.J."/>
        </authorList>
    </citation>
    <scope>NUCLEOTIDE SEQUENCE [GENOMIC DNA]</scope>
    <source>
        <strain>UTEX LB 555 / Pringsheim</strain>
    </source>
</reference>
<reference key="2">
    <citation type="journal article" date="1995" name="Plant Mol. Biol. Rep.">
        <title>Nucleotide sequence of the cyanelle DNA from Cyanophora paradoxa.</title>
        <authorList>
            <person name="Stirewalt V.L."/>
            <person name="Michalowski C.B."/>
            <person name="Loeffelhardt W."/>
            <person name="Bohnert H.J."/>
            <person name="Bryant D.A."/>
        </authorList>
    </citation>
    <scope>NUCLEOTIDE SEQUENCE [LARGE SCALE GENOMIC DNA]</scope>
    <source>
        <strain>UTEX LB 555 / Pringsheim</strain>
    </source>
</reference>
<reference key="3">
    <citation type="book" date="1997" name="Eukaryotism and symbiosis">
        <title>The complete sequence of the cyanelle genome of Cyanophora paradoxa: the genetic complexity of a primitive plastid.</title>
        <editorList>
            <person name="Schenk H.E.A."/>
            <person name="Herrmann R."/>
            <person name="Jeon K.W."/>
            <person name="Mueller N.E."/>
            <person name="Schwemmler W."/>
        </editorList>
        <authorList>
            <person name="Loeffelhardt W."/>
            <person name="Stirewalt V.L."/>
            <person name="Michalowski C.B."/>
            <person name="Annarella M."/>
            <person name="Farley J.Y."/>
            <person name="Schluchter W.M."/>
            <person name="Chung S."/>
            <person name="Newmann-Spallart C."/>
            <person name="Steiner J.M."/>
            <person name="Jakowitsch J."/>
            <person name="Bohnert H.J."/>
            <person name="Bryant D.A."/>
        </authorList>
    </citation>
    <scope>NUCLEOTIDE SEQUENCE [LARGE SCALE GENOMIC DNA]</scope>
    <source>
        <strain>UTEX LB 555 / Pringsheim</strain>
    </source>
</reference>
<name>RR5_CYAPA</name>
<sequence length="169" mass="17980">MANRQKMSKTRDKKPDWQERVVQIRRVSKVVKGGKKLSFRAIVVIGNERGQVGVGIGKASDVINAVKKAAADGKKHVVEVPLTRSNSIPHPIDGIGGAARVIMRPSAEGTGVIAGGAVRTVLELAGVRNILAKQLGSNNPLNNARAAMNALSRLKTFSQFAKDRGVIAE</sequence>
<evidence type="ECO:0000250" key="1"/>
<evidence type="ECO:0000305" key="2"/>
<gene>
    <name type="primary">rps5</name>
</gene>